<accession>Q2NT67</accession>
<name>Y1383_SODGM</name>
<evidence type="ECO:0000255" key="1">
    <source>
        <dbReference type="HAMAP-Rule" id="MF_01067"/>
    </source>
</evidence>
<comment type="subcellular location">
    <subcellularLocation>
        <location evidence="1">Cell inner membrane</location>
        <topology evidence="1">Multi-pass membrane protein</topology>
    </subcellularLocation>
</comment>
<comment type="similarity">
    <text evidence="1">Belongs to the UPF0259 family.</text>
</comment>
<proteinExistence type="inferred from homology"/>
<sequence>MPIMASTLYRDMLNFFRNQFASILLLALLTALISVVLGHALSPGSEQLMTLSDGTHLGDTAEMSLQQLVQQMSVEQQRVLLKASAAGTLAGLVGNVLLAGGLLTMIRQVSNRQPVSVLRAIGLSAPLLPRLLLLIFLTTLLVQLGLLLIIVPGILLAIAFSLAPVIATSDDLGAIKSMRQSSSLAFANLRLLAPAVLFWLLAKAAVLLLATQFTLVSSLVAVVLLNGLSNLISALLLIYLYRLYMLLRQA</sequence>
<protein>
    <recommendedName>
        <fullName evidence="1">UPF0259 membrane protein SG1383</fullName>
    </recommendedName>
</protein>
<reference key="1">
    <citation type="journal article" date="2006" name="Genome Res.">
        <title>Massive genome erosion and functional adaptations provide insights into the symbiotic lifestyle of Sodalis glossinidius in the tsetse host.</title>
        <authorList>
            <person name="Toh H."/>
            <person name="Weiss B.L."/>
            <person name="Perkin S.A.H."/>
            <person name="Yamashita A."/>
            <person name="Oshima K."/>
            <person name="Hattori M."/>
            <person name="Aksoy S."/>
        </authorList>
    </citation>
    <scope>NUCLEOTIDE SEQUENCE [LARGE SCALE GENOMIC DNA]</scope>
    <source>
        <strain>morsitans</strain>
    </source>
</reference>
<feature type="chain" id="PRO_1000064536" description="UPF0259 membrane protein SG1383">
    <location>
        <begin position="1"/>
        <end position="250"/>
    </location>
</feature>
<feature type="transmembrane region" description="Helical" evidence="1">
    <location>
        <begin position="20"/>
        <end position="40"/>
    </location>
</feature>
<feature type="transmembrane region" description="Helical" evidence="1">
    <location>
        <begin position="86"/>
        <end position="106"/>
    </location>
</feature>
<feature type="transmembrane region" description="Helical" evidence="1">
    <location>
        <begin position="121"/>
        <end position="141"/>
    </location>
</feature>
<feature type="transmembrane region" description="Helical" evidence="1">
    <location>
        <begin position="146"/>
        <end position="166"/>
    </location>
</feature>
<feature type="transmembrane region" description="Helical" evidence="1">
    <location>
        <begin position="191"/>
        <end position="211"/>
    </location>
</feature>
<feature type="transmembrane region" description="Helical" evidence="1">
    <location>
        <begin position="219"/>
        <end position="239"/>
    </location>
</feature>
<organism>
    <name type="scientific">Sodalis glossinidius (strain morsitans)</name>
    <dbReference type="NCBI Taxonomy" id="343509"/>
    <lineage>
        <taxon>Bacteria</taxon>
        <taxon>Pseudomonadati</taxon>
        <taxon>Pseudomonadota</taxon>
        <taxon>Gammaproteobacteria</taxon>
        <taxon>Enterobacterales</taxon>
        <taxon>Bruguierivoracaceae</taxon>
        <taxon>Sodalis</taxon>
    </lineage>
</organism>
<keyword id="KW-0997">Cell inner membrane</keyword>
<keyword id="KW-1003">Cell membrane</keyword>
<keyword id="KW-0472">Membrane</keyword>
<keyword id="KW-0812">Transmembrane</keyword>
<keyword id="KW-1133">Transmembrane helix</keyword>
<dbReference type="EMBL" id="AP008232">
    <property type="protein sequence ID" value="BAE74658.1"/>
    <property type="molecule type" value="Genomic_DNA"/>
</dbReference>
<dbReference type="RefSeq" id="WP_011411203.1">
    <property type="nucleotide sequence ID" value="NC_007712.1"/>
</dbReference>
<dbReference type="STRING" id="343509.SG1383"/>
<dbReference type="KEGG" id="sgl:SG1383"/>
<dbReference type="eggNOG" id="ENOG502Z96Y">
    <property type="taxonomic scope" value="Bacteria"/>
</dbReference>
<dbReference type="HOGENOM" id="CLU_073287_0_0_6"/>
<dbReference type="OrthoDB" id="6454524at2"/>
<dbReference type="BioCyc" id="SGLO343509:SGP1_RS12120-MONOMER"/>
<dbReference type="Proteomes" id="UP000001932">
    <property type="component" value="Chromosome"/>
</dbReference>
<dbReference type="GO" id="GO:0005886">
    <property type="term" value="C:plasma membrane"/>
    <property type="evidence" value="ECO:0007669"/>
    <property type="project" value="UniProtKB-SubCell"/>
</dbReference>
<dbReference type="HAMAP" id="MF_01067">
    <property type="entry name" value="UPF0259"/>
    <property type="match status" value="1"/>
</dbReference>
<dbReference type="InterPro" id="IPR009627">
    <property type="entry name" value="UPF0259"/>
</dbReference>
<dbReference type="NCBIfam" id="NF002774">
    <property type="entry name" value="PRK02868.1"/>
    <property type="match status" value="1"/>
</dbReference>
<dbReference type="Pfam" id="PF06790">
    <property type="entry name" value="UPF0259"/>
    <property type="match status" value="1"/>
</dbReference>
<gene>
    <name type="ordered locus">SG1383</name>
</gene>